<protein>
    <recommendedName>
        <fullName>Neuromodulin</fullName>
    </recommendedName>
    <alternativeName>
        <fullName>Axonal membrane protein GAP-43</fullName>
    </alternativeName>
    <alternativeName>
        <fullName>Growth-associated protein 43</fullName>
    </alternativeName>
</protein>
<sequence length="213" mass="23569">MLCCIRRTKPVEKNEEADQEIKQDGTKPEENAHKAATKIQASFRGHITRKKMKDEDKDGENDTAPDESAETEEKEERVSPSEEKPVEVSTETAEESKPAEQPNSPAAEAPPTAATDSAPSDTPTKEEAQEQLQDAEEPKETENTAAADDITTQKEEEKEEEEEEEEEEEEAKRADVPDDTPAATESQETDQTDKKEALDDSKPAEEAGKDQNV</sequence>
<gene>
    <name type="primary">gap43</name>
</gene>
<feature type="chain" id="PRO_0000159602" description="Neuromodulin">
    <location>
        <begin position="1"/>
        <end position="213"/>
    </location>
</feature>
<feature type="domain" description="IQ" evidence="4">
    <location>
        <begin position="32"/>
        <end position="61"/>
    </location>
</feature>
<feature type="region of interest" description="Disordered" evidence="5">
    <location>
        <begin position="1"/>
        <end position="213"/>
    </location>
</feature>
<feature type="compositionally biased region" description="Basic and acidic residues" evidence="5">
    <location>
        <begin position="9"/>
        <end position="33"/>
    </location>
</feature>
<feature type="compositionally biased region" description="Acidic residues" evidence="5">
    <location>
        <begin position="57"/>
        <end position="73"/>
    </location>
</feature>
<feature type="compositionally biased region" description="Basic and acidic residues" evidence="5">
    <location>
        <begin position="74"/>
        <end position="86"/>
    </location>
</feature>
<feature type="compositionally biased region" description="Low complexity" evidence="5">
    <location>
        <begin position="102"/>
        <end position="122"/>
    </location>
</feature>
<feature type="compositionally biased region" description="Acidic residues" evidence="5">
    <location>
        <begin position="157"/>
        <end position="169"/>
    </location>
</feature>
<feature type="compositionally biased region" description="Basic and acidic residues" evidence="5">
    <location>
        <begin position="191"/>
        <end position="213"/>
    </location>
</feature>
<feature type="lipid moiety-binding region" description="S-palmitoyl cysteine" evidence="2">
    <location>
        <position position="3"/>
    </location>
</feature>
<feature type="lipid moiety-binding region" description="S-palmitoyl cysteine" evidence="2">
    <location>
        <position position="4"/>
    </location>
</feature>
<name>NEUM_CARAU</name>
<accession>P17691</accession>
<keyword id="KW-0112">Calmodulin-binding</keyword>
<keyword id="KW-1003">Cell membrane</keyword>
<keyword id="KW-0966">Cell projection</keyword>
<keyword id="KW-0217">Developmental protein</keyword>
<keyword id="KW-0221">Differentiation</keyword>
<keyword id="KW-0341">Growth regulation</keyword>
<keyword id="KW-0449">Lipoprotein</keyword>
<keyword id="KW-0472">Membrane</keyword>
<keyword id="KW-0524">Neurogenesis</keyword>
<keyword id="KW-0564">Palmitate</keyword>
<keyword id="KW-0597">Phosphoprotein</keyword>
<keyword id="KW-1185">Reference proteome</keyword>
<keyword id="KW-0770">Synapse</keyword>
<organism>
    <name type="scientific">Carassius auratus</name>
    <name type="common">Goldfish</name>
    <dbReference type="NCBI Taxonomy" id="7957"/>
    <lineage>
        <taxon>Eukaryota</taxon>
        <taxon>Metazoa</taxon>
        <taxon>Chordata</taxon>
        <taxon>Craniata</taxon>
        <taxon>Vertebrata</taxon>
        <taxon>Euteleostomi</taxon>
        <taxon>Actinopterygii</taxon>
        <taxon>Neopterygii</taxon>
        <taxon>Teleostei</taxon>
        <taxon>Ostariophysi</taxon>
        <taxon>Cypriniformes</taxon>
        <taxon>Cyprinidae</taxon>
        <taxon>Cyprininae</taxon>
        <taxon>Carassius</taxon>
    </lineage>
</organism>
<proteinExistence type="evidence at transcript level"/>
<evidence type="ECO:0000250" key="1"/>
<evidence type="ECO:0000250" key="2">
    <source>
        <dbReference type="UniProtKB" id="P06837"/>
    </source>
</evidence>
<evidence type="ECO:0000250" key="3">
    <source>
        <dbReference type="UniProtKB" id="P17677"/>
    </source>
</evidence>
<evidence type="ECO:0000255" key="4">
    <source>
        <dbReference type="PROSITE-ProRule" id="PRU00116"/>
    </source>
</evidence>
<evidence type="ECO:0000256" key="5">
    <source>
        <dbReference type="SAM" id="MobiDB-lite"/>
    </source>
</evidence>
<evidence type="ECO:0000305" key="6"/>
<reference key="1">
    <citation type="journal article" date="1989" name="Neuron">
        <title>Selective conservation of GAP-43 structure in vertebrate evolution.</title>
        <authorList>
            <person name="Labate M.E."/>
            <person name="Skene J.H.P."/>
        </authorList>
    </citation>
    <scope>NUCLEOTIDE SEQUENCE [MRNA]</scope>
</reference>
<dbReference type="EMBL" id="M26250">
    <property type="protein sequence ID" value="AAA03010.1"/>
    <property type="molecule type" value="mRNA"/>
</dbReference>
<dbReference type="PIR" id="JQ0075">
    <property type="entry name" value="JQ0075"/>
</dbReference>
<dbReference type="SMR" id="P17691"/>
<dbReference type="Proteomes" id="UP000515129">
    <property type="component" value="Unplaced"/>
</dbReference>
<dbReference type="GO" id="GO:0031527">
    <property type="term" value="C:filopodium membrane"/>
    <property type="evidence" value="ECO:0007669"/>
    <property type="project" value="UniProtKB-SubCell"/>
</dbReference>
<dbReference type="GO" id="GO:0032584">
    <property type="term" value="C:growth cone membrane"/>
    <property type="evidence" value="ECO:0007669"/>
    <property type="project" value="UniProtKB-SubCell"/>
</dbReference>
<dbReference type="GO" id="GO:0045202">
    <property type="term" value="C:synapse"/>
    <property type="evidence" value="ECO:0007669"/>
    <property type="project" value="UniProtKB-SubCell"/>
</dbReference>
<dbReference type="GO" id="GO:0005516">
    <property type="term" value="F:calmodulin binding"/>
    <property type="evidence" value="ECO:0007669"/>
    <property type="project" value="UniProtKB-KW"/>
</dbReference>
<dbReference type="GO" id="GO:0030154">
    <property type="term" value="P:cell differentiation"/>
    <property type="evidence" value="ECO:0007669"/>
    <property type="project" value="UniProtKB-KW"/>
</dbReference>
<dbReference type="GO" id="GO:0007399">
    <property type="term" value="P:nervous system development"/>
    <property type="evidence" value="ECO:0007669"/>
    <property type="project" value="UniProtKB-KW"/>
</dbReference>
<dbReference type="GO" id="GO:0040008">
    <property type="term" value="P:regulation of growth"/>
    <property type="evidence" value="ECO:0007669"/>
    <property type="project" value="InterPro"/>
</dbReference>
<dbReference type="CDD" id="cd23767">
    <property type="entry name" value="IQCD"/>
    <property type="match status" value="1"/>
</dbReference>
<dbReference type="Gene3D" id="1.20.5.190">
    <property type="match status" value="1"/>
</dbReference>
<dbReference type="InterPro" id="IPR000048">
    <property type="entry name" value="IQ_motif_EF-hand-BS"/>
</dbReference>
<dbReference type="InterPro" id="IPR001422">
    <property type="entry name" value="Neuromodulin"/>
</dbReference>
<dbReference type="InterPro" id="IPR018947">
    <property type="entry name" value="Neuromodulin_gap-junction_N"/>
</dbReference>
<dbReference type="InterPro" id="IPR033137">
    <property type="entry name" value="Neuromodulin_P_site"/>
</dbReference>
<dbReference type="InterPro" id="IPR018243">
    <property type="entry name" value="Neuromodulin_palmitoyl_site"/>
</dbReference>
<dbReference type="Pfam" id="PF00612">
    <property type="entry name" value="IQ"/>
    <property type="match status" value="1"/>
</dbReference>
<dbReference type="Pfam" id="PF10580">
    <property type="entry name" value="Neuromodulin_N"/>
    <property type="match status" value="1"/>
</dbReference>
<dbReference type="PRINTS" id="PR00215">
    <property type="entry name" value="NEUROMODULIN"/>
</dbReference>
<dbReference type="SMART" id="SM00015">
    <property type="entry name" value="IQ"/>
    <property type="match status" value="1"/>
</dbReference>
<dbReference type="PROSITE" id="PS50096">
    <property type="entry name" value="IQ"/>
    <property type="match status" value="1"/>
</dbReference>
<dbReference type="PROSITE" id="PS00412">
    <property type="entry name" value="NEUROMODULIN_1"/>
    <property type="match status" value="1"/>
</dbReference>
<dbReference type="PROSITE" id="PS00413">
    <property type="entry name" value="NEUROMODULIN_2"/>
    <property type="match status" value="1"/>
</dbReference>
<comment type="function">
    <text evidence="3">This protein is associated with nerve growth. It is a major component of the motile 'growth cones' that form the tips of elongating axons. Plays a role in axonal and dendritic filopodia induction (By similarity).</text>
</comment>
<comment type="subunit">
    <text evidence="1">Binds calmodulin with a greater affinity in the absence of Ca(2+) than in its presence.</text>
</comment>
<comment type="subcellular location">
    <subcellularLocation>
        <location evidence="3">Cell membrane</location>
        <topology evidence="3">Peripheral membrane protein</topology>
        <orientation evidence="3">Cytoplasmic side</orientation>
    </subcellularLocation>
    <subcellularLocation>
        <location evidence="3">Cell projection</location>
        <location evidence="3">Growth cone membrane</location>
        <topology evidence="3">Peripheral membrane protein</topology>
        <orientation evidence="3">Cytoplasmic side</orientation>
    </subcellularLocation>
    <subcellularLocation>
        <location evidence="3">Synapse</location>
    </subcellularLocation>
    <subcellularLocation>
        <location evidence="3">Cell projection</location>
        <location evidence="3">Filopodium membrane</location>
        <topology evidence="3">Peripheral membrane protein</topology>
    </subcellularLocation>
</comment>
<comment type="PTM">
    <text evidence="2 3">Palmitoylated (By similarity). Palmitoylation is essential for plasma membrane association (By similarity).</text>
</comment>
<comment type="similarity">
    <text evidence="6">Belongs to the neuromodulin family.</text>
</comment>